<keyword id="KW-0150">Chloroplast</keyword>
<keyword id="KW-0934">Plastid</keyword>
<keyword id="KW-0687">Ribonucleoprotein</keyword>
<keyword id="KW-0689">Ribosomal protein</keyword>
<keyword id="KW-0694">RNA-binding</keyword>
<keyword id="KW-0699">rRNA-binding</keyword>
<sequence>MAKPILRIGSRKNTRSGSRKNVRRIPKGVIHVQASFNNTIVTVTDVRGRVISWSSAGTCGFRGTRRGTPFAAQTAAGNAIRAVVDQGMQRAEVRIKGPGLGRDAALRAIRRSGILLSFVRDVTPMPHNGCRPPKKRRV</sequence>
<gene>
    <name evidence="1" type="primary">rps11</name>
</gene>
<comment type="subunit">
    <text evidence="1">Part of the 30S ribosomal subunit.</text>
</comment>
<comment type="subcellular location">
    <subcellularLocation>
        <location>Plastid</location>
        <location>Chloroplast</location>
    </subcellularLocation>
</comment>
<comment type="similarity">
    <text evidence="1">Belongs to the universal ribosomal protein uS11 family.</text>
</comment>
<protein>
    <recommendedName>
        <fullName evidence="1">Small ribosomal subunit protein uS11c</fullName>
    </recommendedName>
    <alternativeName>
        <fullName evidence="3">30S ribosomal protein S11, chloroplastic</fullName>
    </alternativeName>
</protein>
<evidence type="ECO:0000255" key="1">
    <source>
        <dbReference type="HAMAP-Rule" id="MF_01310"/>
    </source>
</evidence>
<evidence type="ECO:0000256" key="2">
    <source>
        <dbReference type="SAM" id="MobiDB-lite"/>
    </source>
</evidence>
<evidence type="ECO:0000305" key="3"/>
<organism>
    <name type="scientific">Capsella bursa-pastoris</name>
    <name type="common">Shepherd's purse</name>
    <name type="synonym">Thlaspi bursa-pastoris</name>
    <dbReference type="NCBI Taxonomy" id="3719"/>
    <lineage>
        <taxon>Eukaryota</taxon>
        <taxon>Viridiplantae</taxon>
        <taxon>Streptophyta</taxon>
        <taxon>Embryophyta</taxon>
        <taxon>Tracheophyta</taxon>
        <taxon>Spermatophyta</taxon>
        <taxon>Magnoliopsida</taxon>
        <taxon>eudicotyledons</taxon>
        <taxon>Gunneridae</taxon>
        <taxon>Pentapetalae</taxon>
        <taxon>rosids</taxon>
        <taxon>malvids</taxon>
        <taxon>Brassicales</taxon>
        <taxon>Brassicaceae</taxon>
        <taxon>Camelineae</taxon>
        <taxon>Capsella</taxon>
    </lineage>
</organism>
<feature type="chain" id="PRO_0000294913" description="Small ribosomal subunit protein uS11c">
    <location>
        <begin position="1"/>
        <end position="138"/>
    </location>
</feature>
<feature type="region of interest" description="Disordered" evidence="2">
    <location>
        <begin position="1"/>
        <end position="23"/>
    </location>
</feature>
<feature type="compositionally biased region" description="Basic residues" evidence="2">
    <location>
        <begin position="9"/>
        <end position="23"/>
    </location>
</feature>
<accession>A4QKM5</accession>
<proteinExistence type="inferred from homology"/>
<geneLocation type="chloroplast"/>
<dbReference type="EMBL" id="AP009371">
    <property type="protein sequence ID" value="BAF50230.1"/>
    <property type="molecule type" value="Genomic_DNA"/>
</dbReference>
<dbReference type="RefSeq" id="YP_001123406.1">
    <property type="nucleotide sequence ID" value="NC_009270.1"/>
</dbReference>
<dbReference type="SMR" id="A4QKM5"/>
<dbReference type="GeneID" id="4961632"/>
<dbReference type="GO" id="GO:0009507">
    <property type="term" value="C:chloroplast"/>
    <property type="evidence" value="ECO:0007669"/>
    <property type="project" value="UniProtKB-SubCell"/>
</dbReference>
<dbReference type="GO" id="GO:1990904">
    <property type="term" value="C:ribonucleoprotein complex"/>
    <property type="evidence" value="ECO:0007669"/>
    <property type="project" value="UniProtKB-KW"/>
</dbReference>
<dbReference type="GO" id="GO:0005840">
    <property type="term" value="C:ribosome"/>
    <property type="evidence" value="ECO:0007669"/>
    <property type="project" value="UniProtKB-KW"/>
</dbReference>
<dbReference type="GO" id="GO:0019843">
    <property type="term" value="F:rRNA binding"/>
    <property type="evidence" value="ECO:0007669"/>
    <property type="project" value="UniProtKB-UniRule"/>
</dbReference>
<dbReference type="GO" id="GO:0003735">
    <property type="term" value="F:structural constituent of ribosome"/>
    <property type="evidence" value="ECO:0007669"/>
    <property type="project" value="InterPro"/>
</dbReference>
<dbReference type="GO" id="GO:0006412">
    <property type="term" value="P:translation"/>
    <property type="evidence" value="ECO:0007669"/>
    <property type="project" value="UniProtKB-UniRule"/>
</dbReference>
<dbReference type="FunFam" id="3.30.420.80:FF:000003">
    <property type="entry name" value="30S ribosomal protein S11, chloroplastic"/>
    <property type="match status" value="1"/>
</dbReference>
<dbReference type="Gene3D" id="3.30.420.80">
    <property type="entry name" value="Ribosomal protein S11"/>
    <property type="match status" value="1"/>
</dbReference>
<dbReference type="HAMAP" id="MF_01310">
    <property type="entry name" value="Ribosomal_uS11"/>
    <property type="match status" value="1"/>
</dbReference>
<dbReference type="InterPro" id="IPR001971">
    <property type="entry name" value="Ribosomal_uS11"/>
</dbReference>
<dbReference type="InterPro" id="IPR019981">
    <property type="entry name" value="Ribosomal_uS11_bac-type"/>
</dbReference>
<dbReference type="InterPro" id="IPR018102">
    <property type="entry name" value="Ribosomal_uS11_CS"/>
</dbReference>
<dbReference type="InterPro" id="IPR036967">
    <property type="entry name" value="Ribosomal_uS11_sf"/>
</dbReference>
<dbReference type="NCBIfam" id="NF003698">
    <property type="entry name" value="PRK05309.1"/>
    <property type="match status" value="1"/>
</dbReference>
<dbReference type="NCBIfam" id="TIGR03632">
    <property type="entry name" value="uS11_bact"/>
    <property type="match status" value="1"/>
</dbReference>
<dbReference type="PANTHER" id="PTHR11759">
    <property type="entry name" value="40S RIBOSOMAL PROTEIN S14/30S RIBOSOMAL PROTEIN S11"/>
    <property type="match status" value="1"/>
</dbReference>
<dbReference type="Pfam" id="PF00411">
    <property type="entry name" value="Ribosomal_S11"/>
    <property type="match status" value="1"/>
</dbReference>
<dbReference type="PIRSF" id="PIRSF002131">
    <property type="entry name" value="Ribosomal_S11"/>
    <property type="match status" value="1"/>
</dbReference>
<dbReference type="SUPFAM" id="SSF53137">
    <property type="entry name" value="Translational machinery components"/>
    <property type="match status" value="1"/>
</dbReference>
<dbReference type="PROSITE" id="PS00054">
    <property type="entry name" value="RIBOSOMAL_S11"/>
    <property type="match status" value="1"/>
</dbReference>
<reference key="1">
    <citation type="submission" date="2007-03" db="EMBL/GenBank/DDBJ databases">
        <title>Sequencing analysis of Capsella bursa-pastoris JO22 chloroplast DNA.</title>
        <authorList>
            <person name="Hosouchi T."/>
            <person name="Tsuruoka H."/>
            <person name="Kotani H."/>
        </authorList>
    </citation>
    <scope>NUCLEOTIDE SEQUENCE [LARGE SCALE GENOMIC DNA]</scope>
</reference>
<name>RR11_CAPBU</name>